<dbReference type="EMBL" id="AE005174">
    <property type="protein sequence ID" value="AAG58337.1"/>
    <property type="molecule type" value="Genomic_DNA"/>
</dbReference>
<dbReference type="EMBL" id="BA000007">
    <property type="protein sequence ID" value="BAB37505.1"/>
    <property type="molecule type" value="Genomic_DNA"/>
</dbReference>
<dbReference type="PIR" id="B91139">
    <property type="entry name" value="B91139"/>
</dbReference>
<dbReference type="PIR" id="E85984">
    <property type="entry name" value="E85984"/>
</dbReference>
<dbReference type="RefSeq" id="NP_312109.1">
    <property type="nucleotide sequence ID" value="NC_002695.1"/>
</dbReference>
<dbReference type="RefSeq" id="WP_001176599.1">
    <property type="nucleotide sequence ID" value="NZ_VOAI01000014.1"/>
</dbReference>
<dbReference type="BMRB" id="P0AFX2"/>
<dbReference type="SMR" id="P0AFX2"/>
<dbReference type="STRING" id="155864.Z4566"/>
<dbReference type="GeneID" id="916070"/>
<dbReference type="GeneID" id="93778778"/>
<dbReference type="KEGG" id="ece:Z4566"/>
<dbReference type="KEGG" id="ecs:ECs_4082"/>
<dbReference type="PATRIC" id="fig|386585.9.peg.4261"/>
<dbReference type="eggNOG" id="COG1544">
    <property type="taxonomic scope" value="Bacteria"/>
</dbReference>
<dbReference type="HOGENOM" id="CLU_071472_3_1_6"/>
<dbReference type="OMA" id="NLTGHHI"/>
<dbReference type="Proteomes" id="UP000000558">
    <property type="component" value="Chromosome"/>
</dbReference>
<dbReference type="Proteomes" id="UP000002519">
    <property type="component" value="Chromosome"/>
</dbReference>
<dbReference type="GO" id="GO:0022627">
    <property type="term" value="C:cytosolic small ribosomal subunit"/>
    <property type="evidence" value="ECO:0007669"/>
    <property type="project" value="TreeGrafter"/>
</dbReference>
<dbReference type="GO" id="GO:0043024">
    <property type="term" value="F:ribosomal small subunit binding"/>
    <property type="evidence" value="ECO:0007669"/>
    <property type="project" value="TreeGrafter"/>
</dbReference>
<dbReference type="GO" id="GO:0045900">
    <property type="term" value="P:negative regulation of translational elongation"/>
    <property type="evidence" value="ECO:0007669"/>
    <property type="project" value="TreeGrafter"/>
</dbReference>
<dbReference type="CDD" id="cd00552">
    <property type="entry name" value="RaiA"/>
    <property type="match status" value="1"/>
</dbReference>
<dbReference type="FunFam" id="3.30.160.100:FF:000001">
    <property type="entry name" value="Ribosome hibernation promoting factor"/>
    <property type="match status" value="1"/>
</dbReference>
<dbReference type="Gene3D" id="3.30.160.100">
    <property type="entry name" value="Ribosome hibernation promotion factor-like"/>
    <property type="match status" value="1"/>
</dbReference>
<dbReference type="InterPro" id="IPR050574">
    <property type="entry name" value="HPF/YfiA_ribosome-assoc"/>
</dbReference>
<dbReference type="InterPro" id="IPR036567">
    <property type="entry name" value="RHF-like"/>
</dbReference>
<dbReference type="InterPro" id="IPR003489">
    <property type="entry name" value="RHF/RaiA"/>
</dbReference>
<dbReference type="NCBIfam" id="NF007780">
    <property type="entry name" value="PRK10470.1"/>
    <property type="match status" value="1"/>
</dbReference>
<dbReference type="NCBIfam" id="TIGR00741">
    <property type="entry name" value="yfiA"/>
    <property type="match status" value="1"/>
</dbReference>
<dbReference type="PANTHER" id="PTHR33231">
    <property type="entry name" value="30S RIBOSOMAL PROTEIN"/>
    <property type="match status" value="1"/>
</dbReference>
<dbReference type="PANTHER" id="PTHR33231:SF1">
    <property type="entry name" value="30S RIBOSOMAL PROTEIN"/>
    <property type="match status" value="1"/>
</dbReference>
<dbReference type="Pfam" id="PF02482">
    <property type="entry name" value="Ribosomal_S30AE"/>
    <property type="match status" value="1"/>
</dbReference>
<dbReference type="SUPFAM" id="SSF69754">
    <property type="entry name" value="Ribosome binding protein Y (YfiA homologue)"/>
    <property type="match status" value="1"/>
</dbReference>
<evidence type="ECO:0000250" key="1"/>
<evidence type="ECO:0000250" key="2">
    <source>
        <dbReference type="UniProtKB" id="P0AFX0"/>
    </source>
</evidence>
<evidence type="ECO:0000305" key="3"/>
<feature type="chain" id="PRO_0000097419" description="Ribosome hibernation promoting factor">
    <location>
        <begin position="1"/>
        <end position="95"/>
    </location>
</feature>
<proteinExistence type="inferred from homology"/>
<gene>
    <name type="primary">hpf</name>
    <name type="ordered locus">Z4566</name>
    <name type="ordered locus">ECs4082</name>
</gene>
<protein>
    <recommendedName>
        <fullName>Ribosome hibernation promoting factor</fullName>
        <shortName>HPF</shortName>
    </recommendedName>
    <alternativeName>
        <fullName>Hibernation factor HPF</fullName>
    </alternativeName>
</protein>
<name>HPF_ECO57</name>
<sequence>MQLNITGNNVEITEALREFVTAKFAKLEQYFDRINQVYVVLKVEKVTHTSDATLHVNGGEIHASAEGQDMYAAIDGLIDKLARQLTKHKDKLKQH</sequence>
<organism>
    <name type="scientific">Escherichia coli O157:H7</name>
    <dbReference type="NCBI Taxonomy" id="83334"/>
    <lineage>
        <taxon>Bacteria</taxon>
        <taxon>Pseudomonadati</taxon>
        <taxon>Pseudomonadota</taxon>
        <taxon>Gammaproteobacteria</taxon>
        <taxon>Enterobacterales</taxon>
        <taxon>Enterobacteriaceae</taxon>
        <taxon>Escherichia</taxon>
    </lineage>
</organism>
<comment type="function">
    <text evidence="2">During stationary phase, promotes and stabilizes dimerization of 70S ribosomes by the ribosome modulation factor (RMF), leading to the formation of inactive 100S ribosomes.</text>
</comment>
<comment type="subunit">
    <text evidence="2">Associates exclusively with 100S ribosomes, which are dimers of 70S ribosomes.</text>
</comment>
<comment type="induction">
    <text evidence="1">Induced during stationary growth phase.</text>
</comment>
<comment type="similarity">
    <text evidence="3">Belongs to the HPF/YfiA ribosome-associated protein family. Short HPF subfamily.</text>
</comment>
<keyword id="KW-1185">Reference proteome</keyword>
<keyword id="KW-0810">Translation regulation</keyword>
<reference key="1">
    <citation type="journal article" date="2001" name="Nature">
        <title>Genome sequence of enterohaemorrhagic Escherichia coli O157:H7.</title>
        <authorList>
            <person name="Perna N.T."/>
            <person name="Plunkett G. III"/>
            <person name="Burland V."/>
            <person name="Mau B."/>
            <person name="Glasner J.D."/>
            <person name="Rose D.J."/>
            <person name="Mayhew G.F."/>
            <person name="Evans P.S."/>
            <person name="Gregor J."/>
            <person name="Kirkpatrick H.A."/>
            <person name="Posfai G."/>
            <person name="Hackett J."/>
            <person name="Klink S."/>
            <person name="Boutin A."/>
            <person name="Shao Y."/>
            <person name="Miller L."/>
            <person name="Grotbeck E.J."/>
            <person name="Davis N.W."/>
            <person name="Lim A."/>
            <person name="Dimalanta E.T."/>
            <person name="Potamousis K."/>
            <person name="Apodaca J."/>
            <person name="Anantharaman T.S."/>
            <person name="Lin J."/>
            <person name="Yen G."/>
            <person name="Schwartz D.C."/>
            <person name="Welch R.A."/>
            <person name="Blattner F.R."/>
        </authorList>
    </citation>
    <scope>NUCLEOTIDE SEQUENCE [LARGE SCALE GENOMIC DNA]</scope>
    <source>
        <strain>O157:H7 / EDL933 / ATCC 700927 / EHEC</strain>
    </source>
</reference>
<reference key="2">
    <citation type="journal article" date="2001" name="DNA Res.">
        <title>Complete genome sequence of enterohemorrhagic Escherichia coli O157:H7 and genomic comparison with a laboratory strain K-12.</title>
        <authorList>
            <person name="Hayashi T."/>
            <person name="Makino K."/>
            <person name="Ohnishi M."/>
            <person name="Kurokawa K."/>
            <person name="Ishii K."/>
            <person name="Yokoyama K."/>
            <person name="Han C.-G."/>
            <person name="Ohtsubo E."/>
            <person name="Nakayama K."/>
            <person name="Murata T."/>
            <person name="Tanaka M."/>
            <person name="Tobe T."/>
            <person name="Iida T."/>
            <person name="Takami H."/>
            <person name="Honda T."/>
            <person name="Sasakawa C."/>
            <person name="Ogasawara N."/>
            <person name="Yasunaga T."/>
            <person name="Kuhara S."/>
            <person name="Shiba T."/>
            <person name="Hattori M."/>
            <person name="Shinagawa H."/>
        </authorList>
    </citation>
    <scope>NUCLEOTIDE SEQUENCE [LARGE SCALE GENOMIC DNA]</scope>
    <source>
        <strain>O157:H7 / Sakai / RIMD 0509952 / EHEC</strain>
    </source>
</reference>
<accession>P0AFX2</accession>
<accession>P31221</accession>